<reference key="1">
    <citation type="submission" date="2007-11" db="EMBL/GenBank/DDBJ databases">
        <authorList>
            <consortium name="The Salmonella enterica serovar Arizonae Genome Sequencing Project"/>
            <person name="McClelland M."/>
            <person name="Sanderson E.K."/>
            <person name="Porwollik S."/>
            <person name="Spieth J."/>
            <person name="Clifton W.S."/>
            <person name="Fulton R."/>
            <person name="Chunyan W."/>
            <person name="Wollam A."/>
            <person name="Shah N."/>
            <person name="Pepin K."/>
            <person name="Bhonagiri V."/>
            <person name="Nash W."/>
            <person name="Johnson M."/>
            <person name="Thiruvilangam P."/>
            <person name="Wilson R."/>
        </authorList>
    </citation>
    <scope>NUCLEOTIDE SEQUENCE [LARGE SCALE GENOMIC DNA]</scope>
    <source>
        <strain>ATCC BAA-731 / CDC346-86 / RSK2980</strain>
    </source>
</reference>
<name>PPNP_SALAR</name>
<sequence length="94" mass="10174">MLQSNEYFSGKVKSIGFTSSSTGRASVGVMAEGEYTFGTAEPEEMTVVSGALKVLLPGTVDWKVYTAGDVFNVPGHSEFHLQIAEPTSYLCRYL</sequence>
<keyword id="KW-0328">Glycosyltransferase</keyword>
<keyword id="KW-1185">Reference proteome</keyword>
<keyword id="KW-0808">Transferase</keyword>
<protein>
    <recommendedName>
        <fullName evidence="1">Pyrimidine/purine nucleoside phosphorylase</fullName>
        <ecNumber evidence="1">2.4.2.1</ecNumber>
        <ecNumber evidence="1">2.4.2.2</ecNumber>
    </recommendedName>
    <alternativeName>
        <fullName evidence="1">Adenosine phosphorylase</fullName>
    </alternativeName>
    <alternativeName>
        <fullName evidence="1">Cytidine phosphorylase</fullName>
    </alternativeName>
    <alternativeName>
        <fullName evidence="1">Guanosine phosphorylase</fullName>
    </alternativeName>
    <alternativeName>
        <fullName evidence="1">Inosine phosphorylase</fullName>
    </alternativeName>
    <alternativeName>
        <fullName evidence="1">Thymidine phosphorylase</fullName>
    </alternativeName>
    <alternativeName>
        <fullName evidence="1">Uridine phosphorylase</fullName>
    </alternativeName>
    <alternativeName>
        <fullName evidence="1">Xanthosine phosphorylase</fullName>
    </alternativeName>
</protein>
<dbReference type="EC" id="2.4.2.1" evidence="1"/>
<dbReference type="EC" id="2.4.2.2" evidence="1"/>
<dbReference type="EMBL" id="CP000880">
    <property type="protein sequence ID" value="ABX22394.1"/>
    <property type="molecule type" value="Genomic_DNA"/>
</dbReference>
<dbReference type="SMR" id="A9MMR9"/>
<dbReference type="STRING" id="41514.SARI_02535"/>
<dbReference type="KEGG" id="ses:SARI_02535"/>
<dbReference type="HOGENOM" id="CLU_157874_0_0_6"/>
<dbReference type="Proteomes" id="UP000002084">
    <property type="component" value="Chromosome"/>
</dbReference>
<dbReference type="GO" id="GO:0005829">
    <property type="term" value="C:cytosol"/>
    <property type="evidence" value="ECO:0007669"/>
    <property type="project" value="TreeGrafter"/>
</dbReference>
<dbReference type="GO" id="GO:0047975">
    <property type="term" value="F:guanosine phosphorylase activity"/>
    <property type="evidence" value="ECO:0007669"/>
    <property type="project" value="UniProtKB-EC"/>
</dbReference>
<dbReference type="GO" id="GO:0004731">
    <property type="term" value="F:purine-nucleoside phosphorylase activity"/>
    <property type="evidence" value="ECO:0007669"/>
    <property type="project" value="UniProtKB-UniRule"/>
</dbReference>
<dbReference type="GO" id="GO:0009032">
    <property type="term" value="F:thymidine phosphorylase activity"/>
    <property type="evidence" value="ECO:0007669"/>
    <property type="project" value="UniProtKB-EC"/>
</dbReference>
<dbReference type="GO" id="GO:0004850">
    <property type="term" value="F:uridine phosphorylase activity"/>
    <property type="evidence" value="ECO:0007669"/>
    <property type="project" value="UniProtKB-EC"/>
</dbReference>
<dbReference type="CDD" id="cd20296">
    <property type="entry name" value="cupin_PpnP-like"/>
    <property type="match status" value="1"/>
</dbReference>
<dbReference type="FunFam" id="2.60.120.10:FF:000016">
    <property type="entry name" value="Pyrimidine/purine nucleoside phosphorylase"/>
    <property type="match status" value="1"/>
</dbReference>
<dbReference type="Gene3D" id="2.60.120.10">
    <property type="entry name" value="Jelly Rolls"/>
    <property type="match status" value="1"/>
</dbReference>
<dbReference type="HAMAP" id="MF_01537">
    <property type="entry name" value="Nucleos_phosphorylase_PpnP"/>
    <property type="match status" value="1"/>
</dbReference>
<dbReference type="InterPro" id="IPR009664">
    <property type="entry name" value="Ppnp"/>
</dbReference>
<dbReference type="InterPro" id="IPR014710">
    <property type="entry name" value="RmlC-like_jellyroll"/>
</dbReference>
<dbReference type="InterPro" id="IPR011051">
    <property type="entry name" value="RmlC_Cupin_sf"/>
</dbReference>
<dbReference type="NCBIfam" id="NF007875">
    <property type="entry name" value="PRK10579.1"/>
    <property type="match status" value="1"/>
</dbReference>
<dbReference type="PANTHER" id="PTHR36540">
    <property type="entry name" value="PYRIMIDINE/PURINE NUCLEOSIDE PHOSPHORYLASE"/>
    <property type="match status" value="1"/>
</dbReference>
<dbReference type="PANTHER" id="PTHR36540:SF1">
    <property type="entry name" value="PYRIMIDINE_PURINE NUCLEOSIDE PHOSPHORYLASE"/>
    <property type="match status" value="1"/>
</dbReference>
<dbReference type="Pfam" id="PF06865">
    <property type="entry name" value="Ppnp"/>
    <property type="match status" value="1"/>
</dbReference>
<dbReference type="SUPFAM" id="SSF51182">
    <property type="entry name" value="RmlC-like cupins"/>
    <property type="match status" value="1"/>
</dbReference>
<organism>
    <name type="scientific">Salmonella arizonae (strain ATCC BAA-731 / CDC346-86 / RSK2980)</name>
    <dbReference type="NCBI Taxonomy" id="41514"/>
    <lineage>
        <taxon>Bacteria</taxon>
        <taxon>Pseudomonadati</taxon>
        <taxon>Pseudomonadota</taxon>
        <taxon>Gammaproteobacteria</taxon>
        <taxon>Enterobacterales</taxon>
        <taxon>Enterobacteriaceae</taxon>
        <taxon>Salmonella</taxon>
    </lineage>
</organism>
<accession>A9MMR9</accession>
<feature type="chain" id="PRO_1000087611" description="Pyrimidine/purine nucleoside phosphorylase">
    <location>
        <begin position="1"/>
        <end position="94"/>
    </location>
</feature>
<evidence type="ECO:0000255" key="1">
    <source>
        <dbReference type="HAMAP-Rule" id="MF_01537"/>
    </source>
</evidence>
<comment type="function">
    <text evidence="1">Catalyzes the phosphorolysis of diverse nucleosides, yielding D-ribose 1-phosphate and the respective free bases. Can use uridine, adenosine, guanosine, cytidine, thymidine, inosine and xanthosine as substrates. Also catalyzes the reverse reactions.</text>
</comment>
<comment type="catalytic activity">
    <reaction evidence="1">
        <text>a purine D-ribonucleoside + phosphate = a purine nucleobase + alpha-D-ribose 1-phosphate</text>
        <dbReference type="Rhea" id="RHEA:19805"/>
        <dbReference type="ChEBI" id="CHEBI:26386"/>
        <dbReference type="ChEBI" id="CHEBI:43474"/>
        <dbReference type="ChEBI" id="CHEBI:57720"/>
        <dbReference type="ChEBI" id="CHEBI:142355"/>
        <dbReference type="EC" id="2.4.2.1"/>
    </reaction>
</comment>
<comment type="catalytic activity">
    <reaction evidence="1">
        <text>adenosine + phosphate = alpha-D-ribose 1-phosphate + adenine</text>
        <dbReference type="Rhea" id="RHEA:27642"/>
        <dbReference type="ChEBI" id="CHEBI:16335"/>
        <dbReference type="ChEBI" id="CHEBI:16708"/>
        <dbReference type="ChEBI" id="CHEBI:43474"/>
        <dbReference type="ChEBI" id="CHEBI:57720"/>
        <dbReference type="EC" id="2.4.2.1"/>
    </reaction>
</comment>
<comment type="catalytic activity">
    <reaction evidence="1">
        <text>cytidine + phosphate = cytosine + alpha-D-ribose 1-phosphate</text>
        <dbReference type="Rhea" id="RHEA:52540"/>
        <dbReference type="ChEBI" id="CHEBI:16040"/>
        <dbReference type="ChEBI" id="CHEBI:17562"/>
        <dbReference type="ChEBI" id="CHEBI:43474"/>
        <dbReference type="ChEBI" id="CHEBI:57720"/>
        <dbReference type="EC" id="2.4.2.2"/>
    </reaction>
</comment>
<comment type="catalytic activity">
    <reaction evidence="1">
        <text>guanosine + phosphate = alpha-D-ribose 1-phosphate + guanine</text>
        <dbReference type="Rhea" id="RHEA:13233"/>
        <dbReference type="ChEBI" id="CHEBI:16235"/>
        <dbReference type="ChEBI" id="CHEBI:16750"/>
        <dbReference type="ChEBI" id="CHEBI:43474"/>
        <dbReference type="ChEBI" id="CHEBI:57720"/>
        <dbReference type="EC" id="2.4.2.1"/>
    </reaction>
</comment>
<comment type="catalytic activity">
    <reaction evidence="1">
        <text>inosine + phosphate = alpha-D-ribose 1-phosphate + hypoxanthine</text>
        <dbReference type="Rhea" id="RHEA:27646"/>
        <dbReference type="ChEBI" id="CHEBI:17368"/>
        <dbReference type="ChEBI" id="CHEBI:17596"/>
        <dbReference type="ChEBI" id="CHEBI:43474"/>
        <dbReference type="ChEBI" id="CHEBI:57720"/>
        <dbReference type="EC" id="2.4.2.1"/>
    </reaction>
</comment>
<comment type="catalytic activity">
    <reaction evidence="1">
        <text>thymidine + phosphate = 2-deoxy-alpha-D-ribose 1-phosphate + thymine</text>
        <dbReference type="Rhea" id="RHEA:16037"/>
        <dbReference type="ChEBI" id="CHEBI:17748"/>
        <dbReference type="ChEBI" id="CHEBI:17821"/>
        <dbReference type="ChEBI" id="CHEBI:43474"/>
        <dbReference type="ChEBI" id="CHEBI:57259"/>
        <dbReference type="EC" id="2.4.2.2"/>
    </reaction>
</comment>
<comment type="catalytic activity">
    <reaction evidence="1">
        <text>uridine + phosphate = alpha-D-ribose 1-phosphate + uracil</text>
        <dbReference type="Rhea" id="RHEA:24388"/>
        <dbReference type="ChEBI" id="CHEBI:16704"/>
        <dbReference type="ChEBI" id="CHEBI:17568"/>
        <dbReference type="ChEBI" id="CHEBI:43474"/>
        <dbReference type="ChEBI" id="CHEBI:57720"/>
        <dbReference type="EC" id="2.4.2.2"/>
    </reaction>
</comment>
<comment type="catalytic activity">
    <reaction evidence="1">
        <text>xanthosine + phosphate = alpha-D-ribose 1-phosphate + xanthine</text>
        <dbReference type="Rhea" id="RHEA:27638"/>
        <dbReference type="ChEBI" id="CHEBI:17712"/>
        <dbReference type="ChEBI" id="CHEBI:18107"/>
        <dbReference type="ChEBI" id="CHEBI:43474"/>
        <dbReference type="ChEBI" id="CHEBI:57720"/>
        <dbReference type="EC" id="2.4.2.1"/>
    </reaction>
</comment>
<comment type="similarity">
    <text evidence="1">Belongs to the nucleoside phosphorylase PpnP family.</text>
</comment>
<gene>
    <name evidence="1" type="primary">ppnP</name>
    <name type="ordered locus">SARI_02535</name>
</gene>
<proteinExistence type="inferred from homology"/>